<comment type="function">
    <text evidence="1 2 6 7">Rho subunit of the pentameric ligand-gated chloride channels responsible for mediating the effects of gamma-aminobutyric acid (GABA), the major inhibitory neurotransmitter in the brain (PubMed:8524843, PubMed:8905713). Rho-containing GABA-gated chloride channels are a subclass of GABA(A) receptors (GABAARs) entirely composed of rho subunits, where GABA molecules bind at the rho intersubunit interfaces (By similarity). When activated by GABA, rho-GABAARs selectively allow the flow of chloride anions across the cell membrane down their electrochemical gradient (PubMed:8524843, PubMed:8905713). Rho-1 subunits are primarily expressed in retina where rho-1-containing GABAARs may play a role in retinal neurotransmission (By similarity). Rho-1 GABAARs are also involved in neuronal tonic (extrasynaptic) and phasic (synaptic) transmission in the Purkinje neurons of the cerebellum (By similarity). Rho-1 GABAARs may also contribute to the regulation of glial development in the cerebellum by controlling extrasynaptic transmission (By similarity).</text>
</comment>
<comment type="catalytic activity">
    <reaction evidence="6 7">
        <text>chloride(in) = chloride(out)</text>
        <dbReference type="Rhea" id="RHEA:29823"/>
        <dbReference type="ChEBI" id="CHEBI:17996"/>
    </reaction>
</comment>
<comment type="activity regulation">
    <text evidence="1 6 7">Inhibited by TPMPA, a rho-specific antagonist (By similarity). Inhibited by picrotoxin, when forming a homopentamer (PubMed:8524843, PubMed:8905713). In contrast with other GABAARs, rho-1 GABAAR is not inhibited by bicuculline, when forming a homopentamer (PubMed:8905713). Down-regulated by external protons when forming a homopentamer (PubMed:8905713).</text>
</comment>
<comment type="subunit">
    <text evidence="2 5 6 7">Three rho subunits (rho-1/GBRR1, rho-2/GBRR2 and rho-3/GBRR3) coassemble either to form functional homopentamers or heteropentamers (PubMed:8524843, PubMed:8905713). Rho-1/GBRR1 subunits can also associate with alpha-1/GBRA1 subunits to form a functional GABAAR (By similarity). Interacts with SQSTM1 (PubMed:12431995).</text>
</comment>
<comment type="subcellular location">
    <subcellularLocation>
        <location evidence="2">Postsynaptic cell membrane</location>
        <topology evidence="1">Multi-pass membrane protein</topology>
    </subcellularLocation>
    <subcellularLocation>
        <location evidence="1">Cell membrane</location>
        <topology evidence="1">Multi-pass membrane protein</topology>
    </subcellularLocation>
</comment>
<comment type="domain">
    <text evidence="1">GABAARs subunits share a common topological structure: a peptide sequence made up of a long extracellular N-terminal, four transmembrane domains, intracellular or cytoplasmic domain located between the third and the fourth transmembrane domains.</text>
</comment>
<comment type="similarity">
    <text evidence="9">Belongs to the ligand-gated ion channel (TC 1.A.9) family. Gamma-aminobutyric acid receptor (TC 1.A.9.5) subfamily. GABRR1 sub-subfamily.</text>
</comment>
<comment type="sequence caution" evidence="9">
    <conflict type="erroneous initiation">
        <sequence resource="EMBL-CDS" id="AAA87730"/>
    </conflict>
</comment>
<comment type="sequence caution" evidence="9">
    <conflict type="erroneous initiation">
        <sequence resource="EMBL-CDS" id="CAA64832"/>
    </conflict>
</comment>
<proteinExistence type="evidence at protein level"/>
<keyword id="KW-1003">Cell membrane</keyword>
<keyword id="KW-0868">Chloride</keyword>
<keyword id="KW-0869">Chloride channel</keyword>
<keyword id="KW-1015">Disulfide bond</keyword>
<keyword id="KW-0325">Glycoprotein</keyword>
<keyword id="KW-0407">Ion channel</keyword>
<keyword id="KW-0406">Ion transport</keyword>
<keyword id="KW-0472">Membrane</keyword>
<keyword id="KW-0628">Postsynaptic cell membrane</keyword>
<keyword id="KW-1185">Reference proteome</keyword>
<keyword id="KW-0732">Signal</keyword>
<keyword id="KW-0770">Synapse</keyword>
<keyword id="KW-0812">Transmembrane</keyword>
<keyword id="KW-1133">Transmembrane helix</keyword>
<keyword id="KW-0813">Transport</keyword>
<gene>
    <name evidence="10" type="primary">Gabrr1</name>
</gene>
<reference key="1">
    <citation type="journal article" date="1995" name="Proc. Natl. Acad. Sci. U.S.A.">
        <title>Cloning of a gamma-aminobutyric acid type C receptor subunit in rat retina with a methionine residue critical for picrotoxinin channel block.</title>
        <authorList>
            <person name="Zhang D."/>
            <person name="Pan Z."/>
            <person name="Zhang X."/>
            <person name="Brideau A.D."/>
            <person name="Lipton S.A."/>
        </authorList>
    </citation>
    <scope>NUCLEOTIDE SEQUENCE [MRNA]</scope>
    <scope>FUNCTION</scope>
    <scope>TRANSPORTER ACTIVITY</scope>
    <scope>ACTIVITY REGULATION</scope>
    <scope>HOMOPENTAMER</scope>
    <scope>INTERACTION WITH GBRR1</scope>
    <scope>MUTAGENESIS OF PRO-316 AND THR-320</scope>
    <source>
        <strain>Sprague-Dawley</strain>
    </source>
</reference>
<reference key="2">
    <citation type="journal article" date="1996" name="NeuroReport">
        <title>The rho 1 GABA receptor cloned from rat retina is down-modulated by protons.</title>
        <authorList>
            <person name="Wegelius K."/>
            <person name="Reeben M."/>
            <person name="Saarma M."/>
        </authorList>
    </citation>
    <scope>NUCLEOTIDE SEQUENCE [MRNA]</scope>
    <scope>FUNCTION</scope>
    <scope>TRANSPORTER ACTIVITY</scope>
    <scope>ACTIVITY REGULATION</scope>
    <scope>HOMOPENTAMER</scope>
    <source>
        <strain>Sprague-Dawley</strain>
        <tissue>Retina</tissue>
    </source>
</reference>
<reference key="3">
    <citation type="journal article" date="2003" name="J. Biol. Chem.">
        <title>ZIP3, a new splice variant of the PKC-zeta-interacting protein family, binds to GABAC receptors, PKC-zeta, and Kv beta 2.</title>
        <authorList>
            <person name="Croci C."/>
            <person name="Brandstaetter J.H."/>
            <person name="Enz R."/>
        </authorList>
    </citation>
    <scope>INTERACTION WITH SQSTM1</scope>
</reference>
<accession>P50572</accession>
<organism>
    <name type="scientific">Rattus norvegicus</name>
    <name type="common">Rat</name>
    <dbReference type="NCBI Taxonomy" id="10116"/>
    <lineage>
        <taxon>Eukaryota</taxon>
        <taxon>Metazoa</taxon>
        <taxon>Chordata</taxon>
        <taxon>Craniata</taxon>
        <taxon>Vertebrata</taxon>
        <taxon>Euteleostomi</taxon>
        <taxon>Mammalia</taxon>
        <taxon>Eutheria</taxon>
        <taxon>Euarchontoglires</taxon>
        <taxon>Glires</taxon>
        <taxon>Rodentia</taxon>
        <taxon>Myomorpha</taxon>
        <taxon>Muroidea</taxon>
        <taxon>Muridae</taxon>
        <taxon>Murinae</taxon>
        <taxon>Rattus</taxon>
    </lineage>
</organism>
<sequence>MLAVRNMKFGIFLLWWGWVLAAESTVHWPGREVHEPSKKGSRPQRQRRGAHDDAHKQGSPILKRSSDITKSPLTKSEQLLRIDDHDFSMRPGFGGPAIPVGVDVQVESLDSISEVDMDFTMTLYLRHYWKDERLSFPSTNNLSMTFDGRLVKKIWVPDMFFVHSKRSFIHDTTTDNVMLRVQPDGKVLYSLRVTVTAMCNMDFSRFPLDTQTCSLEIESYAYTEDDLMLYWKKGNDSLKTDERISLSQFLIQEFHTTTKLAFYSSTGWYNRLYINFTLRRHIFFFLLQTYFPATLMVMLSWVSFWIDRRAVPARVPLGITTVLTMSTIITGVNASMPRVSYIKAVDIYLWVSFVFVFLSVLEYAAVNYLTTVQERKERKLREKISCTCGLPQPRGVMLDSSYSDGEVNDLGGYMPENGEKPDRMMVQLTLASERGSPQRKSQRGSYVSMRINTHAIDKYSRIIFPAAYILFNLIYWSIFS</sequence>
<feature type="signal peptide" evidence="3">
    <location>
        <begin position="1"/>
        <end position="21"/>
    </location>
</feature>
<feature type="chain" id="PRO_0000000487" description="Gamma-aminobutyric acid receptor subunit rho-1" evidence="3">
    <location>
        <begin position="22"/>
        <end position="480"/>
    </location>
</feature>
<feature type="topological domain" description="Extracellular" evidence="9">
    <location>
        <begin position="22"/>
        <end position="281"/>
    </location>
</feature>
<feature type="transmembrane region" description="Helical" evidence="3">
    <location>
        <begin position="282"/>
        <end position="302"/>
    </location>
</feature>
<feature type="topological domain" description="Cytoplasmic" evidence="9">
    <location>
        <begin position="303"/>
        <end position="314"/>
    </location>
</feature>
<feature type="transmembrane region" description="Helical" evidence="3">
    <location>
        <begin position="315"/>
        <end position="335"/>
    </location>
</feature>
<feature type="topological domain" description="Extracellular" evidence="9">
    <location>
        <begin position="336"/>
        <end position="346"/>
    </location>
</feature>
<feature type="transmembrane region" description="Helical" evidence="3">
    <location>
        <begin position="347"/>
        <end position="367"/>
    </location>
</feature>
<feature type="topological domain" description="Cytoplasmic" evidence="9">
    <location>
        <begin position="368"/>
        <end position="458"/>
    </location>
</feature>
<feature type="transmembrane region" description="Helical" evidence="3">
    <location>
        <begin position="459"/>
        <end position="479"/>
    </location>
</feature>
<feature type="topological domain" description="Extracellular" evidence="9">
    <location>
        <position position="480"/>
    </location>
</feature>
<feature type="region of interest" description="Disordered" evidence="4">
    <location>
        <begin position="31"/>
        <end position="67"/>
    </location>
</feature>
<feature type="compositionally biased region" description="Basic residues" evidence="4">
    <location>
        <begin position="39"/>
        <end position="48"/>
    </location>
</feature>
<feature type="binding site" description="in chain A" evidence="1">
    <location>
        <position position="126"/>
    </location>
    <ligand>
        <name>4-aminobutanoate</name>
        <dbReference type="ChEBI" id="CHEBI:59888"/>
        <note>ligand shared between two neighboring rho subunits</note>
    </ligand>
</feature>
<feature type="binding site" description="in chain A" evidence="1">
    <location>
        <position position="190"/>
    </location>
    <ligand>
        <name>4-aminobutanoate</name>
        <dbReference type="ChEBI" id="CHEBI:59888"/>
        <note>ligand shared between two neighboring rho subunits</note>
    </ligand>
</feature>
<feature type="binding site" description="in chain B" evidence="1">
    <location>
        <position position="218"/>
    </location>
    <ligand>
        <name>4-aminobutanoate</name>
        <dbReference type="ChEBI" id="CHEBI:59888"/>
        <note>ligand shared between two neighboring rho subunits</note>
    </ligand>
</feature>
<feature type="glycosylation site" description="N-linked (GlcNAc...) asparagine" evidence="3">
    <location>
        <position position="141"/>
    </location>
</feature>
<feature type="glycosylation site" description="N-linked (GlcNAc...) asparagine" evidence="3">
    <location>
        <position position="235"/>
    </location>
</feature>
<feature type="glycosylation site" description="N-linked (GlcNAc...) asparagine" evidence="3">
    <location>
        <position position="275"/>
    </location>
</feature>
<feature type="disulfide bond" evidence="1">
    <location>
        <begin position="199"/>
        <end position="213"/>
    </location>
</feature>
<feature type="mutagenesis site" description="Reduced GABA-evoked current." evidence="6">
    <original>P</original>
    <variation>S</variation>
    <location>
        <position position="316"/>
    </location>
</feature>
<feature type="mutagenesis site" description="Reduced GABA-evoked current." evidence="6">
    <original>T</original>
    <variation>M</variation>
    <location>
        <position position="320"/>
    </location>
</feature>
<name>GBRR1_RAT</name>
<evidence type="ECO:0000250" key="1">
    <source>
        <dbReference type="UniProtKB" id="P24046"/>
    </source>
</evidence>
<evidence type="ECO:0000250" key="2">
    <source>
        <dbReference type="UniProtKB" id="P56475"/>
    </source>
</evidence>
<evidence type="ECO:0000255" key="3"/>
<evidence type="ECO:0000256" key="4">
    <source>
        <dbReference type="SAM" id="MobiDB-lite"/>
    </source>
</evidence>
<evidence type="ECO:0000269" key="5">
    <source>
    </source>
</evidence>
<evidence type="ECO:0000269" key="6">
    <source>
    </source>
</evidence>
<evidence type="ECO:0000269" key="7">
    <source>
    </source>
</evidence>
<evidence type="ECO:0000303" key="8">
    <source>
    </source>
</evidence>
<evidence type="ECO:0000305" key="9"/>
<evidence type="ECO:0000312" key="10">
    <source>
        <dbReference type="RGD" id="61900"/>
    </source>
</evidence>
<dbReference type="EMBL" id="U21070">
    <property type="protein sequence ID" value="AAA87730.1"/>
    <property type="status" value="ALT_INIT"/>
    <property type="molecule type" value="mRNA"/>
</dbReference>
<dbReference type="EMBL" id="X95579">
    <property type="protein sequence ID" value="CAA64832.1"/>
    <property type="status" value="ALT_INIT"/>
    <property type="molecule type" value="mRNA"/>
</dbReference>
<dbReference type="RefSeq" id="NP_058987.3">
    <property type="nucleotide sequence ID" value="NM_017291.4"/>
</dbReference>
<dbReference type="SMR" id="P50572"/>
<dbReference type="FunCoup" id="P50572">
    <property type="interactions" value="89"/>
</dbReference>
<dbReference type="STRING" id="10116.ENSRNOP00000010172"/>
<dbReference type="GuidetoPHARMACOLOGY" id="420"/>
<dbReference type="GlyCosmos" id="P50572">
    <property type="glycosylation" value="3 sites, No reported glycans"/>
</dbReference>
<dbReference type="GlyGen" id="P50572">
    <property type="glycosylation" value="3 sites"/>
</dbReference>
<dbReference type="iPTMnet" id="P50572"/>
<dbReference type="PhosphoSitePlus" id="P50572"/>
<dbReference type="PaxDb" id="10116-ENSRNOP00000010172"/>
<dbReference type="Ensembl" id="ENSRNOT00000010172.7">
    <property type="protein sequence ID" value="ENSRNOP00000010172.6"/>
    <property type="gene ID" value="ENSRNOG00000007603.7"/>
</dbReference>
<dbReference type="GeneID" id="29694"/>
<dbReference type="UCSC" id="RGD:61900">
    <property type="organism name" value="rat"/>
</dbReference>
<dbReference type="AGR" id="RGD:61900"/>
<dbReference type="RGD" id="61900">
    <property type="gene designation" value="Gabrr1"/>
</dbReference>
<dbReference type="eggNOG" id="KOG3643">
    <property type="taxonomic scope" value="Eukaryota"/>
</dbReference>
<dbReference type="GeneTree" id="ENSGT00940000158591"/>
<dbReference type="InParanoid" id="P50572"/>
<dbReference type="OMA" id="HWQGREI"/>
<dbReference type="PhylomeDB" id="P50572"/>
<dbReference type="Reactome" id="R-RNO-977443">
    <property type="pathway name" value="GABA receptor activation"/>
</dbReference>
<dbReference type="PRO" id="PR:P50572"/>
<dbReference type="Proteomes" id="UP000002494">
    <property type="component" value="Chromosome 5"/>
</dbReference>
<dbReference type="GO" id="GO:0034707">
    <property type="term" value="C:chloride channel complex"/>
    <property type="evidence" value="ECO:0007669"/>
    <property type="project" value="UniProtKB-KW"/>
</dbReference>
<dbReference type="GO" id="GO:1902711">
    <property type="term" value="C:GABA-A receptor complex"/>
    <property type="evidence" value="ECO:0000318"/>
    <property type="project" value="GO_Central"/>
</dbReference>
<dbReference type="GO" id="GO:0098982">
    <property type="term" value="C:GABA-ergic synapse"/>
    <property type="evidence" value="ECO:0000266"/>
    <property type="project" value="RGD"/>
</dbReference>
<dbReference type="GO" id="GO:0098978">
    <property type="term" value="C:glutamatergic synapse"/>
    <property type="evidence" value="ECO:0000266"/>
    <property type="project" value="RGD"/>
</dbReference>
<dbReference type="GO" id="GO:0097708">
    <property type="term" value="C:intracellular vesicle"/>
    <property type="evidence" value="ECO:0000266"/>
    <property type="project" value="RGD"/>
</dbReference>
<dbReference type="GO" id="GO:0005886">
    <property type="term" value="C:plasma membrane"/>
    <property type="evidence" value="ECO:0000250"/>
    <property type="project" value="UniProtKB"/>
</dbReference>
<dbReference type="GO" id="GO:0045211">
    <property type="term" value="C:postsynaptic membrane"/>
    <property type="evidence" value="ECO:0007669"/>
    <property type="project" value="UniProtKB-SubCell"/>
</dbReference>
<dbReference type="GO" id="GO:0042734">
    <property type="term" value="C:presynaptic membrane"/>
    <property type="evidence" value="ECO:0000266"/>
    <property type="project" value="RGD"/>
</dbReference>
<dbReference type="GO" id="GO:0016917">
    <property type="term" value="F:GABA receptor activity"/>
    <property type="evidence" value="ECO:0000314"/>
    <property type="project" value="RGD"/>
</dbReference>
<dbReference type="GO" id="GO:0004890">
    <property type="term" value="F:GABA-A receptor activity"/>
    <property type="evidence" value="ECO:0000314"/>
    <property type="project" value="UniProtKB"/>
</dbReference>
<dbReference type="GO" id="GO:0022851">
    <property type="term" value="F:GABA-gated chloride ion channel activity"/>
    <property type="evidence" value="ECO:0000314"/>
    <property type="project" value="UniProtKB"/>
</dbReference>
<dbReference type="GO" id="GO:0042802">
    <property type="term" value="F:identical protein binding"/>
    <property type="evidence" value="ECO:0000353"/>
    <property type="project" value="RGD"/>
</dbReference>
<dbReference type="GO" id="GO:0099507">
    <property type="term" value="F:ligand-gated monoatomic ion channel activity involved in regulation of presynaptic membrane potential"/>
    <property type="evidence" value="ECO:0000266"/>
    <property type="project" value="RGD"/>
</dbReference>
<dbReference type="GO" id="GO:0019904">
    <property type="term" value="F:protein domain specific binding"/>
    <property type="evidence" value="ECO:0000353"/>
    <property type="project" value="RGD"/>
</dbReference>
<dbReference type="GO" id="GO:0044877">
    <property type="term" value="F:protein-containing complex binding"/>
    <property type="evidence" value="ECO:0000314"/>
    <property type="project" value="RGD"/>
</dbReference>
<dbReference type="GO" id="GO:1902476">
    <property type="term" value="P:chloride transmembrane transport"/>
    <property type="evidence" value="ECO:0000318"/>
    <property type="project" value="GO_Central"/>
</dbReference>
<dbReference type="GO" id="GO:0050804">
    <property type="term" value="P:modulation of chemical synaptic transmission"/>
    <property type="evidence" value="ECO:0000266"/>
    <property type="project" value="RGD"/>
</dbReference>
<dbReference type="CDD" id="cd19005">
    <property type="entry name" value="LGIC_ECD_GABAAR_rho"/>
    <property type="match status" value="1"/>
</dbReference>
<dbReference type="CDD" id="cd19059">
    <property type="entry name" value="LGIC_TM_GABAAR_rho"/>
    <property type="match status" value="1"/>
</dbReference>
<dbReference type="FunFam" id="2.70.170.10:FF:000015">
    <property type="entry name" value="gamma-aminobutyric acid receptor subunit rho-1 isoform X1"/>
    <property type="match status" value="1"/>
</dbReference>
<dbReference type="FunFam" id="1.20.58.390:FF:000005">
    <property type="entry name" value="Putative gamma-aminobutyric acid receptor subunit rho-2-like"/>
    <property type="match status" value="1"/>
</dbReference>
<dbReference type="Gene3D" id="2.70.170.10">
    <property type="entry name" value="Neurotransmitter-gated ion-channel ligand-binding domain"/>
    <property type="match status" value="1"/>
</dbReference>
<dbReference type="Gene3D" id="1.20.58.390">
    <property type="entry name" value="Neurotransmitter-gated ion-channel transmembrane domain"/>
    <property type="match status" value="1"/>
</dbReference>
<dbReference type="InterPro" id="IPR006028">
    <property type="entry name" value="GABAA/Glycine_rcpt"/>
</dbReference>
<dbReference type="InterPro" id="IPR008058">
    <property type="entry name" value="GABAAa_rho1_rcpt"/>
</dbReference>
<dbReference type="InterPro" id="IPR008057">
    <property type="entry name" value="GABAAa_rho_rcpt"/>
</dbReference>
<dbReference type="InterPro" id="IPR006202">
    <property type="entry name" value="Neur_chan_lig-bd"/>
</dbReference>
<dbReference type="InterPro" id="IPR036734">
    <property type="entry name" value="Neur_chan_lig-bd_sf"/>
</dbReference>
<dbReference type="InterPro" id="IPR006201">
    <property type="entry name" value="Neur_channel"/>
</dbReference>
<dbReference type="InterPro" id="IPR036719">
    <property type="entry name" value="Neuro-gated_channel_TM_sf"/>
</dbReference>
<dbReference type="InterPro" id="IPR038050">
    <property type="entry name" value="Neuro_actylchol_rec"/>
</dbReference>
<dbReference type="InterPro" id="IPR006029">
    <property type="entry name" value="Neurotrans-gated_channel_TM"/>
</dbReference>
<dbReference type="InterPro" id="IPR018000">
    <property type="entry name" value="Neurotransmitter_ion_chnl_CS"/>
</dbReference>
<dbReference type="NCBIfam" id="TIGR00860">
    <property type="entry name" value="LIC"/>
    <property type="match status" value="1"/>
</dbReference>
<dbReference type="PANTHER" id="PTHR18945">
    <property type="entry name" value="NEUROTRANSMITTER GATED ION CHANNEL"/>
    <property type="match status" value="1"/>
</dbReference>
<dbReference type="Pfam" id="PF02931">
    <property type="entry name" value="Neur_chan_LBD"/>
    <property type="match status" value="1"/>
</dbReference>
<dbReference type="Pfam" id="PF02932">
    <property type="entry name" value="Neur_chan_memb"/>
    <property type="match status" value="1"/>
</dbReference>
<dbReference type="PRINTS" id="PR00253">
    <property type="entry name" value="GABAARECEPTR"/>
</dbReference>
<dbReference type="PRINTS" id="PR01670">
    <property type="entry name" value="GABAARRHO"/>
</dbReference>
<dbReference type="PRINTS" id="PR01671">
    <property type="entry name" value="GABAARRHO1"/>
</dbReference>
<dbReference type="PRINTS" id="PR00252">
    <property type="entry name" value="NRIONCHANNEL"/>
</dbReference>
<dbReference type="SUPFAM" id="SSF90112">
    <property type="entry name" value="Neurotransmitter-gated ion-channel transmembrane pore"/>
    <property type="match status" value="1"/>
</dbReference>
<dbReference type="SUPFAM" id="SSF63712">
    <property type="entry name" value="Nicotinic receptor ligand binding domain-like"/>
    <property type="match status" value="1"/>
</dbReference>
<dbReference type="PROSITE" id="PS00236">
    <property type="entry name" value="NEUROTR_ION_CHANNEL"/>
    <property type="match status" value="1"/>
</dbReference>
<protein>
    <recommendedName>
        <fullName evidence="1">Gamma-aminobutyric acid receptor subunit rho-1</fullName>
    </recommendedName>
    <alternativeName>
        <fullName>GABA(A) receptor subunit rho-1</fullName>
        <shortName evidence="1">GABAAR subunit rho-1</shortName>
    </alternativeName>
    <alternativeName>
        <fullName evidence="8">GABA(C) receptor</fullName>
    </alternativeName>
</protein>